<gene>
    <name type="primary">atg22-2</name>
    <name type="ORF">ACLA_068150</name>
</gene>
<sequence>MRADDNPSARSLHAQFPGDDTRPTSKKELAGWYSYGWAAEVFTVCAMGSFLPITLEQMARDRGVLLSDKVTPCSASWNGTETTARTHGISPPWYGINATPGTSQCVVYILGAEINTASFAMYTFSVSVFVQAVLIISMSGAADHGSFRKTLLVAFAVIGSVCTMLFLSVVPKIYIVGALFAIVANTCFGASFVLLNSFLPLLVRHHPSLLGHENERSPELNHSHITDDRVQFAANADYGIDADATSPLLQPVQGDSDEHTTSRLPVTSVVISEELKLSTRISSLGIGIGYIGAVILQIICILVIIATRQTTFSLRLVLFLIGLWWFVFTIPAALWLRPRPGPPLPKAPQGKDNRSCVGYMVYAWKSLCRTAVRTRHLKDILLFLTAWFLLSDGIATVSGTAVLFAKTQLNMKPAALGLINVVTMMAGVFGAFSWSFVSRRLNLGASQTIIACILLFELIPIYGLLGFVPAIRKLGYLGLQQPWEMFPLGIVYGLVMGGLSSYCRSFFGELIPPGNEAAFYALYAITDKGSSIFGPAIVGLITDRYGEIRPAFVFLAVLIFLPLPLMLLVDVGRGKKDALALAVELEEGQSSNTQTYGTLSNCERNAVPTDQ</sequence>
<name>AT222_ASPCL</name>
<proteinExistence type="inferred from homology"/>
<protein>
    <recommendedName>
        <fullName>Autophagy-related protein 22-2</fullName>
    </recommendedName>
</protein>
<feature type="chain" id="PRO_0000318015" description="Autophagy-related protein 22-2">
    <location>
        <begin position="1"/>
        <end position="611"/>
    </location>
</feature>
<feature type="transmembrane region" description="Helical" evidence="2">
    <location>
        <begin position="35"/>
        <end position="55"/>
    </location>
</feature>
<feature type="transmembrane region" description="Helical" evidence="2">
    <location>
        <begin position="116"/>
        <end position="136"/>
    </location>
</feature>
<feature type="transmembrane region" description="Helical" evidence="2">
    <location>
        <begin position="151"/>
        <end position="171"/>
    </location>
</feature>
<feature type="transmembrane region" description="Helical" evidence="2">
    <location>
        <begin position="175"/>
        <end position="195"/>
    </location>
</feature>
<feature type="transmembrane region" description="Helical" evidence="2">
    <location>
        <begin position="286"/>
        <end position="306"/>
    </location>
</feature>
<feature type="transmembrane region" description="Helical" evidence="2">
    <location>
        <begin position="316"/>
        <end position="336"/>
    </location>
</feature>
<feature type="transmembrane region" description="Helical" evidence="2">
    <location>
        <begin position="380"/>
        <end position="400"/>
    </location>
</feature>
<feature type="transmembrane region" description="Helical" evidence="2">
    <location>
        <begin position="414"/>
        <end position="434"/>
    </location>
</feature>
<feature type="transmembrane region" description="Helical" evidence="2">
    <location>
        <begin position="449"/>
        <end position="469"/>
    </location>
</feature>
<feature type="transmembrane region" description="Helical" evidence="2">
    <location>
        <begin position="483"/>
        <end position="503"/>
    </location>
</feature>
<feature type="transmembrane region" description="Helical" evidence="2">
    <location>
        <begin position="521"/>
        <end position="541"/>
    </location>
</feature>
<feature type="transmembrane region" description="Helical" evidence="2">
    <location>
        <begin position="551"/>
        <end position="571"/>
    </location>
</feature>
<feature type="region of interest" description="Disordered" evidence="3">
    <location>
        <begin position="1"/>
        <end position="24"/>
    </location>
</feature>
<feature type="glycosylation site" description="N-linked (GlcNAc...) asparagine" evidence="2">
    <location>
        <position position="78"/>
    </location>
</feature>
<feature type="glycosylation site" description="N-linked (GlcNAc...) asparagine" evidence="2">
    <location>
        <position position="221"/>
    </location>
</feature>
<feature type="glycosylation site" description="N-linked (GlcNAc...) asparagine" evidence="2">
    <location>
        <position position="353"/>
    </location>
</feature>
<comment type="function">
    <text evidence="1">Vacuolar effluxer which mediate the efflux of amino acids resulting from autophagic degradation. The release of autophagic amino acids allows the maintenance of protein synthesis and viability during nitrogen starvation (By similarity).</text>
</comment>
<comment type="subcellular location">
    <subcellularLocation>
        <location evidence="1">Vacuole membrane</location>
        <topology evidence="1">Multi-pass membrane protein</topology>
    </subcellularLocation>
    <text evidence="1">Vacuole and punctate structures.</text>
</comment>
<comment type="similarity">
    <text evidence="4">Belongs to the ATG22 family.</text>
</comment>
<organism>
    <name type="scientific">Aspergillus clavatus (strain ATCC 1007 / CBS 513.65 / DSM 816 / NCTC 3887 / NRRL 1 / QM 1276 / 107)</name>
    <dbReference type="NCBI Taxonomy" id="344612"/>
    <lineage>
        <taxon>Eukaryota</taxon>
        <taxon>Fungi</taxon>
        <taxon>Dikarya</taxon>
        <taxon>Ascomycota</taxon>
        <taxon>Pezizomycotina</taxon>
        <taxon>Eurotiomycetes</taxon>
        <taxon>Eurotiomycetidae</taxon>
        <taxon>Eurotiales</taxon>
        <taxon>Aspergillaceae</taxon>
        <taxon>Aspergillus</taxon>
        <taxon>Aspergillus subgen. Fumigati</taxon>
    </lineage>
</organism>
<reference key="1">
    <citation type="journal article" date="2008" name="PLoS Genet.">
        <title>Genomic islands in the pathogenic filamentous fungus Aspergillus fumigatus.</title>
        <authorList>
            <person name="Fedorova N.D."/>
            <person name="Khaldi N."/>
            <person name="Joardar V.S."/>
            <person name="Maiti R."/>
            <person name="Amedeo P."/>
            <person name="Anderson M.J."/>
            <person name="Crabtree J."/>
            <person name="Silva J.C."/>
            <person name="Badger J.H."/>
            <person name="Albarraq A."/>
            <person name="Angiuoli S."/>
            <person name="Bussey H."/>
            <person name="Bowyer P."/>
            <person name="Cotty P.J."/>
            <person name="Dyer P.S."/>
            <person name="Egan A."/>
            <person name="Galens K."/>
            <person name="Fraser-Liggett C.M."/>
            <person name="Haas B.J."/>
            <person name="Inman J.M."/>
            <person name="Kent R."/>
            <person name="Lemieux S."/>
            <person name="Malavazi I."/>
            <person name="Orvis J."/>
            <person name="Roemer T."/>
            <person name="Ronning C.M."/>
            <person name="Sundaram J.P."/>
            <person name="Sutton G."/>
            <person name="Turner G."/>
            <person name="Venter J.C."/>
            <person name="White O.R."/>
            <person name="Whitty B.R."/>
            <person name="Youngman P."/>
            <person name="Wolfe K.H."/>
            <person name="Goldman G.H."/>
            <person name="Wortman J.R."/>
            <person name="Jiang B."/>
            <person name="Denning D.W."/>
            <person name="Nierman W.C."/>
        </authorList>
    </citation>
    <scope>NUCLEOTIDE SEQUENCE [LARGE SCALE GENOMIC DNA]</scope>
    <source>
        <strain>ATCC 1007 / CBS 513.65 / DSM 816 / NCTC 3887 / NRRL 1 / QM 1276 / 107</strain>
    </source>
</reference>
<evidence type="ECO:0000250" key="1"/>
<evidence type="ECO:0000255" key="2"/>
<evidence type="ECO:0000256" key="3">
    <source>
        <dbReference type="SAM" id="MobiDB-lite"/>
    </source>
</evidence>
<evidence type="ECO:0000305" key="4"/>
<accession>A1C5W7</accession>
<dbReference type="EMBL" id="DS027045">
    <property type="protein sequence ID" value="EAW13788.1"/>
    <property type="molecule type" value="Genomic_DNA"/>
</dbReference>
<dbReference type="RefSeq" id="XP_001275214.1">
    <property type="nucleotide sequence ID" value="XM_001275213.1"/>
</dbReference>
<dbReference type="STRING" id="344612.A1C5W7"/>
<dbReference type="GlyCosmos" id="A1C5W7">
    <property type="glycosylation" value="3 sites, No reported glycans"/>
</dbReference>
<dbReference type="EnsemblFungi" id="EAW13788">
    <property type="protein sequence ID" value="EAW13788"/>
    <property type="gene ID" value="ACLA_068150"/>
</dbReference>
<dbReference type="GeneID" id="4708111"/>
<dbReference type="KEGG" id="act:ACLA_068150"/>
<dbReference type="VEuPathDB" id="FungiDB:ACLA_068150"/>
<dbReference type="eggNOG" id="ENOG502QR9I">
    <property type="taxonomic scope" value="Eukaryota"/>
</dbReference>
<dbReference type="HOGENOM" id="CLU_017518_1_0_1"/>
<dbReference type="OMA" id="QQQWEMY"/>
<dbReference type="OrthoDB" id="192733at2759"/>
<dbReference type="Proteomes" id="UP000006701">
    <property type="component" value="Unassembled WGS sequence"/>
</dbReference>
<dbReference type="GO" id="GO:0005774">
    <property type="term" value="C:vacuolar membrane"/>
    <property type="evidence" value="ECO:0007669"/>
    <property type="project" value="UniProtKB-SubCell"/>
</dbReference>
<dbReference type="GO" id="GO:0032974">
    <property type="term" value="P:amino acid transmembrane export from vacuole"/>
    <property type="evidence" value="ECO:0007669"/>
    <property type="project" value="InterPro"/>
</dbReference>
<dbReference type="GO" id="GO:0006914">
    <property type="term" value="P:autophagy"/>
    <property type="evidence" value="ECO:0007669"/>
    <property type="project" value="UniProtKB-KW"/>
</dbReference>
<dbReference type="CDD" id="cd17483">
    <property type="entry name" value="MFS_Atg22_like"/>
    <property type="match status" value="1"/>
</dbReference>
<dbReference type="Gene3D" id="1.20.1250.20">
    <property type="entry name" value="MFS general substrate transporter like domains"/>
    <property type="match status" value="1"/>
</dbReference>
<dbReference type="InterPro" id="IPR044738">
    <property type="entry name" value="Atg22"/>
</dbReference>
<dbReference type="InterPro" id="IPR024671">
    <property type="entry name" value="Atg22-like"/>
</dbReference>
<dbReference type="InterPro" id="IPR050495">
    <property type="entry name" value="ATG22/LtaA_families"/>
</dbReference>
<dbReference type="InterPro" id="IPR036259">
    <property type="entry name" value="MFS_trans_sf"/>
</dbReference>
<dbReference type="PANTHER" id="PTHR23519">
    <property type="entry name" value="AUTOPHAGY-RELATED PROTEIN 22"/>
    <property type="match status" value="1"/>
</dbReference>
<dbReference type="PANTHER" id="PTHR23519:SF1">
    <property type="entry name" value="AUTOPHAGY-RELATED PROTEIN 22"/>
    <property type="match status" value="1"/>
</dbReference>
<dbReference type="Pfam" id="PF11700">
    <property type="entry name" value="ATG22"/>
    <property type="match status" value="1"/>
</dbReference>
<dbReference type="SUPFAM" id="SSF103473">
    <property type="entry name" value="MFS general substrate transporter"/>
    <property type="match status" value="1"/>
</dbReference>
<keyword id="KW-0029">Amino-acid transport</keyword>
<keyword id="KW-0072">Autophagy</keyword>
<keyword id="KW-0325">Glycoprotein</keyword>
<keyword id="KW-0472">Membrane</keyword>
<keyword id="KW-1185">Reference proteome</keyword>
<keyword id="KW-0812">Transmembrane</keyword>
<keyword id="KW-1133">Transmembrane helix</keyword>
<keyword id="KW-0813">Transport</keyword>
<keyword id="KW-0926">Vacuole</keyword>